<proteinExistence type="inferred from homology"/>
<name>DNLJ_CHRSD</name>
<organism>
    <name type="scientific">Chromohalobacter salexigens (strain ATCC BAA-138 / DSM 3043 / CIP 106854 / NCIMB 13768 / 1H11)</name>
    <dbReference type="NCBI Taxonomy" id="290398"/>
    <lineage>
        <taxon>Bacteria</taxon>
        <taxon>Pseudomonadati</taxon>
        <taxon>Pseudomonadota</taxon>
        <taxon>Gammaproteobacteria</taxon>
        <taxon>Oceanospirillales</taxon>
        <taxon>Halomonadaceae</taxon>
        <taxon>Chromohalobacter</taxon>
    </lineage>
</organism>
<dbReference type="EC" id="6.5.1.2" evidence="1"/>
<dbReference type="EMBL" id="CP000285">
    <property type="protein sequence ID" value="ABE58064.1"/>
    <property type="molecule type" value="Genomic_DNA"/>
</dbReference>
<dbReference type="RefSeq" id="WP_011506010.1">
    <property type="nucleotide sequence ID" value="NC_007963.1"/>
</dbReference>
<dbReference type="SMR" id="Q1QZP4"/>
<dbReference type="STRING" id="290398.Csal_0703"/>
<dbReference type="GeneID" id="95333461"/>
<dbReference type="KEGG" id="csa:Csal_0703"/>
<dbReference type="eggNOG" id="COG0272">
    <property type="taxonomic scope" value="Bacteria"/>
</dbReference>
<dbReference type="HOGENOM" id="CLU_007764_2_1_6"/>
<dbReference type="OrthoDB" id="9759736at2"/>
<dbReference type="Proteomes" id="UP000000239">
    <property type="component" value="Chromosome"/>
</dbReference>
<dbReference type="GO" id="GO:0005829">
    <property type="term" value="C:cytosol"/>
    <property type="evidence" value="ECO:0007669"/>
    <property type="project" value="TreeGrafter"/>
</dbReference>
<dbReference type="GO" id="GO:0003677">
    <property type="term" value="F:DNA binding"/>
    <property type="evidence" value="ECO:0007669"/>
    <property type="project" value="InterPro"/>
</dbReference>
<dbReference type="GO" id="GO:0003911">
    <property type="term" value="F:DNA ligase (NAD+) activity"/>
    <property type="evidence" value="ECO:0007669"/>
    <property type="project" value="UniProtKB-UniRule"/>
</dbReference>
<dbReference type="GO" id="GO:0046872">
    <property type="term" value="F:metal ion binding"/>
    <property type="evidence" value="ECO:0007669"/>
    <property type="project" value="UniProtKB-KW"/>
</dbReference>
<dbReference type="GO" id="GO:0006281">
    <property type="term" value="P:DNA repair"/>
    <property type="evidence" value="ECO:0007669"/>
    <property type="project" value="UniProtKB-KW"/>
</dbReference>
<dbReference type="GO" id="GO:0006260">
    <property type="term" value="P:DNA replication"/>
    <property type="evidence" value="ECO:0007669"/>
    <property type="project" value="UniProtKB-KW"/>
</dbReference>
<dbReference type="CDD" id="cd17748">
    <property type="entry name" value="BRCT_DNA_ligase_like"/>
    <property type="match status" value="1"/>
</dbReference>
<dbReference type="CDD" id="cd00114">
    <property type="entry name" value="LIGANc"/>
    <property type="match status" value="1"/>
</dbReference>
<dbReference type="FunFam" id="1.10.150.20:FF:000006">
    <property type="entry name" value="DNA ligase"/>
    <property type="match status" value="1"/>
</dbReference>
<dbReference type="FunFam" id="1.10.150.20:FF:000007">
    <property type="entry name" value="DNA ligase"/>
    <property type="match status" value="1"/>
</dbReference>
<dbReference type="FunFam" id="1.10.287.610:FF:000002">
    <property type="entry name" value="DNA ligase"/>
    <property type="match status" value="1"/>
</dbReference>
<dbReference type="FunFam" id="2.40.50.140:FF:000012">
    <property type="entry name" value="DNA ligase"/>
    <property type="match status" value="1"/>
</dbReference>
<dbReference type="FunFam" id="3.30.470.30:FF:000001">
    <property type="entry name" value="DNA ligase"/>
    <property type="match status" value="1"/>
</dbReference>
<dbReference type="Gene3D" id="6.20.10.30">
    <property type="match status" value="1"/>
</dbReference>
<dbReference type="Gene3D" id="1.10.150.20">
    <property type="entry name" value="5' to 3' exonuclease, C-terminal subdomain"/>
    <property type="match status" value="2"/>
</dbReference>
<dbReference type="Gene3D" id="3.40.50.10190">
    <property type="entry name" value="BRCT domain"/>
    <property type="match status" value="1"/>
</dbReference>
<dbReference type="Gene3D" id="3.30.470.30">
    <property type="entry name" value="DNA ligase/mRNA capping enzyme"/>
    <property type="match status" value="1"/>
</dbReference>
<dbReference type="Gene3D" id="1.10.287.610">
    <property type="entry name" value="Helix hairpin bin"/>
    <property type="match status" value="1"/>
</dbReference>
<dbReference type="Gene3D" id="2.40.50.140">
    <property type="entry name" value="Nucleic acid-binding proteins"/>
    <property type="match status" value="1"/>
</dbReference>
<dbReference type="HAMAP" id="MF_01588">
    <property type="entry name" value="DNA_ligase_A"/>
    <property type="match status" value="1"/>
</dbReference>
<dbReference type="InterPro" id="IPR001357">
    <property type="entry name" value="BRCT_dom"/>
</dbReference>
<dbReference type="InterPro" id="IPR036420">
    <property type="entry name" value="BRCT_dom_sf"/>
</dbReference>
<dbReference type="InterPro" id="IPR041663">
    <property type="entry name" value="DisA/LigA_HHH"/>
</dbReference>
<dbReference type="InterPro" id="IPR001679">
    <property type="entry name" value="DNA_ligase"/>
</dbReference>
<dbReference type="InterPro" id="IPR018239">
    <property type="entry name" value="DNA_ligase_AS"/>
</dbReference>
<dbReference type="InterPro" id="IPR013839">
    <property type="entry name" value="DNAligase_adenylation"/>
</dbReference>
<dbReference type="InterPro" id="IPR013840">
    <property type="entry name" value="DNAligase_N"/>
</dbReference>
<dbReference type="InterPro" id="IPR003583">
    <property type="entry name" value="Hlx-hairpin-Hlx_DNA-bd_motif"/>
</dbReference>
<dbReference type="InterPro" id="IPR012340">
    <property type="entry name" value="NA-bd_OB-fold"/>
</dbReference>
<dbReference type="InterPro" id="IPR004150">
    <property type="entry name" value="NAD_DNA_ligase_OB"/>
</dbReference>
<dbReference type="InterPro" id="IPR010994">
    <property type="entry name" value="RuvA_2-like"/>
</dbReference>
<dbReference type="InterPro" id="IPR004149">
    <property type="entry name" value="Znf_DNAligase_C4"/>
</dbReference>
<dbReference type="NCBIfam" id="TIGR00575">
    <property type="entry name" value="dnlj"/>
    <property type="match status" value="1"/>
</dbReference>
<dbReference type="NCBIfam" id="NF005932">
    <property type="entry name" value="PRK07956.1"/>
    <property type="match status" value="1"/>
</dbReference>
<dbReference type="PANTHER" id="PTHR23389">
    <property type="entry name" value="CHROMOSOME TRANSMISSION FIDELITY FACTOR 18"/>
    <property type="match status" value="1"/>
</dbReference>
<dbReference type="PANTHER" id="PTHR23389:SF9">
    <property type="entry name" value="DNA LIGASE"/>
    <property type="match status" value="1"/>
</dbReference>
<dbReference type="Pfam" id="PF00533">
    <property type="entry name" value="BRCT"/>
    <property type="match status" value="1"/>
</dbReference>
<dbReference type="Pfam" id="PF01653">
    <property type="entry name" value="DNA_ligase_aden"/>
    <property type="match status" value="1"/>
</dbReference>
<dbReference type="Pfam" id="PF03120">
    <property type="entry name" value="DNA_ligase_OB"/>
    <property type="match status" value="1"/>
</dbReference>
<dbReference type="Pfam" id="PF03119">
    <property type="entry name" value="DNA_ligase_ZBD"/>
    <property type="match status" value="1"/>
</dbReference>
<dbReference type="Pfam" id="PF12826">
    <property type="entry name" value="HHH_2"/>
    <property type="match status" value="1"/>
</dbReference>
<dbReference type="Pfam" id="PF14520">
    <property type="entry name" value="HHH_5"/>
    <property type="match status" value="1"/>
</dbReference>
<dbReference type="Pfam" id="PF22745">
    <property type="entry name" value="Nlig-Ia"/>
    <property type="match status" value="1"/>
</dbReference>
<dbReference type="PIRSF" id="PIRSF001604">
    <property type="entry name" value="LigA"/>
    <property type="match status" value="1"/>
</dbReference>
<dbReference type="SMART" id="SM00292">
    <property type="entry name" value="BRCT"/>
    <property type="match status" value="1"/>
</dbReference>
<dbReference type="SMART" id="SM00278">
    <property type="entry name" value="HhH1"/>
    <property type="match status" value="4"/>
</dbReference>
<dbReference type="SMART" id="SM00532">
    <property type="entry name" value="LIGANc"/>
    <property type="match status" value="1"/>
</dbReference>
<dbReference type="SUPFAM" id="SSF52113">
    <property type="entry name" value="BRCT domain"/>
    <property type="match status" value="1"/>
</dbReference>
<dbReference type="SUPFAM" id="SSF56091">
    <property type="entry name" value="DNA ligase/mRNA capping enzyme, catalytic domain"/>
    <property type="match status" value="1"/>
</dbReference>
<dbReference type="SUPFAM" id="SSF50249">
    <property type="entry name" value="Nucleic acid-binding proteins"/>
    <property type="match status" value="1"/>
</dbReference>
<dbReference type="SUPFAM" id="SSF47781">
    <property type="entry name" value="RuvA domain 2-like"/>
    <property type="match status" value="1"/>
</dbReference>
<dbReference type="PROSITE" id="PS50172">
    <property type="entry name" value="BRCT"/>
    <property type="match status" value="1"/>
</dbReference>
<dbReference type="PROSITE" id="PS01055">
    <property type="entry name" value="DNA_LIGASE_N1"/>
    <property type="match status" value="1"/>
</dbReference>
<feature type="chain" id="PRO_0000313189" description="DNA ligase">
    <location>
        <begin position="1"/>
        <end position="691"/>
    </location>
</feature>
<feature type="domain" description="BRCT" evidence="1">
    <location>
        <begin position="595"/>
        <end position="684"/>
    </location>
</feature>
<feature type="active site" description="N6-AMP-lysine intermediate" evidence="1">
    <location>
        <position position="120"/>
    </location>
</feature>
<feature type="binding site" evidence="1">
    <location>
        <begin position="36"/>
        <end position="40"/>
    </location>
    <ligand>
        <name>NAD(+)</name>
        <dbReference type="ChEBI" id="CHEBI:57540"/>
    </ligand>
</feature>
<feature type="binding site" evidence="1">
    <location>
        <begin position="85"/>
        <end position="86"/>
    </location>
    <ligand>
        <name>NAD(+)</name>
        <dbReference type="ChEBI" id="CHEBI:57540"/>
    </ligand>
</feature>
<feature type="binding site" evidence="1">
    <location>
        <position position="118"/>
    </location>
    <ligand>
        <name>NAD(+)</name>
        <dbReference type="ChEBI" id="CHEBI:57540"/>
    </ligand>
</feature>
<feature type="binding site" evidence="1">
    <location>
        <position position="141"/>
    </location>
    <ligand>
        <name>NAD(+)</name>
        <dbReference type="ChEBI" id="CHEBI:57540"/>
    </ligand>
</feature>
<feature type="binding site" evidence="1">
    <location>
        <position position="178"/>
    </location>
    <ligand>
        <name>NAD(+)</name>
        <dbReference type="ChEBI" id="CHEBI:57540"/>
    </ligand>
</feature>
<feature type="binding site" evidence="1">
    <location>
        <position position="295"/>
    </location>
    <ligand>
        <name>NAD(+)</name>
        <dbReference type="ChEBI" id="CHEBI:57540"/>
    </ligand>
</feature>
<feature type="binding site" evidence="1">
    <location>
        <position position="319"/>
    </location>
    <ligand>
        <name>NAD(+)</name>
        <dbReference type="ChEBI" id="CHEBI:57540"/>
    </ligand>
</feature>
<feature type="binding site" evidence="1">
    <location>
        <position position="413"/>
    </location>
    <ligand>
        <name>Zn(2+)</name>
        <dbReference type="ChEBI" id="CHEBI:29105"/>
    </ligand>
</feature>
<feature type="binding site" evidence="1">
    <location>
        <position position="416"/>
    </location>
    <ligand>
        <name>Zn(2+)</name>
        <dbReference type="ChEBI" id="CHEBI:29105"/>
    </ligand>
</feature>
<feature type="binding site" evidence="1">
    <location>
        <position position="431"/>
    </location>
    <ligand>
        <name>Zn(2+)</name>
        <dbReference type="ChEBI" id="CHEBI:29105"/>
    </ligand>
</feature>
<feature type="binding site" evidence="1">
    <location>
        <position position="437"/>
    </location>
    <ligand>
        <name>Zn(2+)</name>
        <dbReference type="ChEBI" id="CHEBI:29105"/>
    </ligand>
</feature>
<sequence length="691" mass="75767">MSQIPQAVRERADTLHQQLDDANYQYYVEDDPRITDAEYDALLRELQSLEAEHPELKTPDSPTQRVGAAPAERFEEVTHAVPMLSLDNAFDDAELAAFVKRVADKLECDGDTLAFCCEPKLDGLAVALVYENGRLVQGATRGDGRTGEDVTLNLRTIRSIPLKLRGDSIPPLIEVRGEVYMRHSGFEALNDRARENGDKVFANPRNAAAGSLRQLDSSIAAARPLEFCAYQVARLEGEDDAHSHSDYLKRLRTLGFRTSPLLDVVKGERGVIDFCHRLGEQRNGLDYDIDGAVIKVDSLRDQRELGFVSRAPRWAIAYKYPAQEQTTTLNDVVFQVGRVGTLTPVAKLEPVQVAGVTVANATLHNMDEIERLGVRIGDTVIVRRAGDVIPQIVGVVESQRPATTRAIEMPEHCPVCGSQTERLEGEVAARCSGGLFCPAQRKEALKHFASRRALDIDGLGEKLIDLLVEREWVKTPADLFRLEAERLAELPRLAEKSANNLVNALEAAKRTTLARFIYAIGIREVGEATAASLARHFGSLQALSEASLEALEAVEDVGPVVARHIHTFFRQPHNQETLEDLQGVGVTWEEVEIAGRPQPLAGQTWVLTGTLESMTRDDGKARLQALGAKVSGSVSKKTAGVVAGEAAGSKLEKAQNLGVEVIDEREFLQRLAHWESASSEDAQPTAPEDTP</sequence>
<reference key="1">
    <citation type="journal article" date="2011" name="Stand. Genomic Sci.">
        <title>Complete genome sequence of the halophilic and highly halotolerant Chromohalobacter salexigens type strain (1H11(T)).</title>
        <authorList>
            <person name="Copeland A."/>
            <person name="O'Connor K."/>
            <person name="Lucas S."/>
            <person name="Lapidus A."/>
            <person name="Berry K.W."/>
            <person name="Detter J.C."/>
            <person name="Del Rio T.G."/>
            <person name="Hammon N."/>
            <person name="Dalin E."/>
            <person name="Tice H."/>
            <person name="Pitluck S."/>
            <person name="Bruce D."/>
            <person name="Goodwin L."/>
            <person name="Han C."/>
            <person name="Tapia R."/>
            <person name="Saunders E."/>
            <person name="Schmutz J."/>
            <person name="Brettin T."/>
            <person name="Larimer F."/>
            <person name="Land M."/>
            <person name="Hauser L."/>
            <person name="Vargas C."/>
            <person name="Nieto J.J."/>
            <person name="Kyrpides N.C."/>
            <person name="Ivanova N."/>
            <person name="Goker M."/>
            <person name="Klenk H.P."/>
            <person name="Csonka L.N."/>
            <person name="Woyke T."/>
        </authorList>
    </citation>
    <scope>NUCLEOTIDE SEQUENCE [LARGE SCALE GENOMIC DNA]</scope>
    <source>
        <strain>ATCC BAA-138 / DSM 3043 / CIP 106854 / NCIMB 13768 / 1H11</strain>
    </source>
</reference>
<protein>
    <recommendedName>
        <fullName evidence="1">DNA ligase</fullName>
        <ecNumber evidence="1">6.5.1.2</ecNumber>
    </recommendedName>
    <alternativeName>
        <fullName evidence="1">Polydeoxyribonucleotide synthase [NAD(+)]</fullName>
    </alternativeName>
</protein>
<accession>Q1QZP4</accession>
<comment type="function">
    <text evidence="1">DNA ligase that catalyzes the formation of phosphodiester linkages between 5'-phosphoryl and 3'-hydroxyl groups in double-stranded DNA using NAD as a coenzyme and as the energy source for the reaction. It is essential for DNA replication and repair of damaged DNA.</text>
</comment>
<comment type="catalytic activity">
    <reaction evidence="1">
        <text>NAD(+) + (deoxyribonucleotide)n-3'-hydroxyl + 5'-phospho-(deoxyribonucleotide)m = (deoxyribonucleotide)n+m + AMP + beta-nicotinamide D-nucleotide.</text>
        <dbReference type="EC" id="6.5.1.2"/>
    </reaction>
</comment>
<comment type="cofactor">
    <cofactor evidence="1">
        <name>Mg(2+)</name>
        <dbReference type="ChEBI" id="CHEBI:18420"/>
    </cofactor>
    <cofactor evidence="1">
        <name>Mn(2+)</name>
        <dbReference type="ChEBI" id="CHEBI:29035"/>
    </cofactor>
</comment>
<comment type="similarity">
    <text evidence="1">Belongs to the NAD-dependent DNA ligase family. LigA subfamily.</text>
</comment>
<keyword id="KW-0227">DNA damage</keyword>
<keyword id="KW-0234">DNA repair</keyword>
<keyword id="KW-0235">DNA replication</keyword>
<keyword id="KW-0436">Ligase</keyword>
<keyword id="KW-0460">Magnesium</keyword>
<keyword id="KW-0464">Manganese</keyword>
<keyword id="KW-0479">Metal-binding</keyword>
<keyword id="KW-0520">NAD</keyword>
<keyword id="KW-1185">Reference proteome</keyword>
<keyword id="KW-0862">Zinc</keyword>
<evidence type="ECO:0000255" key="1">
    <source>
        <dbReference type="HAMAP-Rule" id="MF_01588"/>
    </source>
</evidence>
<gene>
    <name evidence="1" type="primary">ligA</name>
    <name type="ordered locus">Csal_0703</name>
</gene>